<proteinExistence type="inferred from homology"/>
<feature type="chain" id="PRO_0000166172" description="Nitrogen fixation protein NifU">
    <location>
        <begin position="1" status="less than"/>
        <end position="112"/>
    </location>
</feature>
<feature type="non-terminal residue">
    <location>
        <position position="1"/>
    </location>
</feature>
<name>NIFU_ANASL</name>
<organism>
    <name type="scientific">Anabaena sp. (strain L31)</name>
    <dbReference type="NCBI Taxonomy" id="29412"/>
    <lineage>
        <taxon>Bacteria</taxon>
        <taxon>Bacillati</taxon>
        <taxon>Cyanobacteriota</taxon>
        <taxon>Cyanophyceae</taxon>
        <taxon>Nostocales</taxon>
        <taxon>Nostocaceae</taxon>
        <taxon>Anabaena</taxon>
    </lineage>
</organism>
<dbReference type="EMBL" id="L04499">
    <property type="protein sequence ID" value="AAA22013.1"/>
    <property type="molecule type" value="Genomic_DNA"/>
</dbReference>
<dbReference type="SMR" id="P33179"/>
<dbReference type="GO" id="GO:0005506">
    <property type="term" value="F:iron ion binding"/>
    <property type="evidence" value="ECO:0007669"/>
    <property type="project" value="InterPro"/>
</dbReference>
<dbReference type="GO" id="GO:0051536">
    <property type="term" value="F:iron-sulfur cluster binding"/>
    <property type="evidence" value="ECO:0007669"/>
    <property type="project" value="InterPro"/>
</dbReference>
<dbReference type="GO" id="GO:0016226">
    <property type="term" value="P:iron-sulfur cluster assembly"/>
    <property type="evidence" value="ECO:0007669"/>
    <property type="project" value="InterPro"/>
</dbReference>
<dbReference type="GO" id="GO:0009399">
    <property type="term" value="P:nitrogen fixation"/>
    <property type="evidence" value="ECO:0007669"/>
    <property type="project" value="UniProtKB-KW"/>
</dbReference>
<dbReference type="Gene3D" id="3.30.300.130">
    <property type="entry name" value="Fe-S cluster assembly (FSCA)"/>
    <property type="match status" value="1"/>
</dbReference>
<dbReference type="InterPro" id="IPR034904">
    <property type="entry name" value="FSCA_dom_sf"/>
</dbReference>
<dbReference type="InterPro" id="IPR001075">
    <property type="entry name" value="NIF_FeS_clus_asmbl_NifU_C"/>
</dbReference>
<dbReference type="PANTHER" id="PTHR11178">
    <property type="entry name" value="IRON-SULFUR CLUSTER SCAFFOLD PROTEIN NFU-RELATED"/>
    <property type="match status" value="1"/>
</dbReference>
<dbReference type="PANTHER" id="PTHR11178:SF25">
    <property type="entry name" value="NIFU-LIKE PROTEIN 3, CHLOROPLASTIC"/>
    <property type="match status" value="1"/>
</dbReference>
<dbReference type="Pfam" id="PF01106">
    <property type="entry name" value="NifU"/>
    <property type="match status" value="1"/>
</dbReference>
<dbReference type="SUPFAM" id="SSF117916">
    <property type="entry name" value="Fe-S cluster assembly (FSCA) domain-like"/>
    <property type="match status" value="1"/>
</dbReference>
<keyword id="KW-0535">Nitrogen fixation</keyword>
<sequence>DIIKDVKEKNAVTNLNTKGVNLTKEIANSGQKRALTNVQKIALIQKVLDEEVRPVLIADGGDVELYDVDGDIVKVVLQGACGSCPSSTATLKIAIESRLRDRINPSLVVEAV</sequence>
<protein>
    <recommendedName>
        <fullName>Nitrogen fixation protein NifU</fullName>
    </recommendedName>
</protein>
<reference key="1">
    <citation type="journal article" date="1993" name="Biochim. Biophys. Acta">
        <title>Cloning and nucleotide sequence of the gene for dinitrogenase reductase (nifH) from the heterocyst-forming cyanobacterium Anabaena sp. L31.</title>
        <authorList>
            <person name="Murphy S.T."/>
            <person name="Jackman D.M."/>
            <person name="Mulligan M.E."/>
        </authorList>
    </citation>
    <scope>NUCLEOTIDE SEQUENCE [GENOMIC DNA]</scope>
</reference>
<accession>P33179</accession>
<comment type="function">
    <text evidence="1">May be involved in the formation or repair of [Fe-S] clusters present in iron-sulfur proteins.</text>
</comment>
<comment type="similarity">
    <text evidence="1">Belongs to the NifU family.</text>
</comment>
<gene>
    <name type="primary">nifU</name>
</gene>
<evidence type="ECO:0000305" key="1"/>